<protein>
    <recommendedName>
        <fullName evidence="1">Fumarate reductase subunit C</fullName>
    </recommendedName>
    <alternativeName>
        <fullName evidence="1">Fumarate reductase 15 kDa hydrophobic protein</fullName>
    </alternativeName>
    <alternativeName>
        <fullName evidence="1">Quinol-fumarate reductase subunit C</fullName>
        <shortName evidence="1">QFR subunit C</shortName>
    </alternativeName>
</protein>
<keyword id="KW-0997">Cell inner membrane</keyword>
<keyword id="KW-1003">Cell membrane</keyword>
<keyword id="KW-0472">Membrane</keyword>
<keyword id="KW-0812">Transmembrane</keyword>
<keyword id="KW-1133">Transmembrane helix</keyword>
<evidence type="ECO:0000255" key="1">
    <source>
        <dbReference type="HAMAP-Rule" id="MF_00708"/>
    </source>
</evidence>
<sequence length="130" mass="14679">MTTKRKAYVRTMAPNWWQQLGFYRFYMLREGTSIPAVWFSVLLIYGVFALKSGPAGWEGFVSFLQNPLVLFLNILTLFAALLHTKTWFELAPKAVNIIVKSEKMGPEPMIKALWVVTVVASAIILAVALL</sequence>
<accession>B2K1Z0</accession>
<comment type="function">
    <text evidence="1">Two distinct, membrane-bound, FAD-containing enzymes are responsible for the catalysis of fumarate and succinate interconversion; fumarate reductase is used in anaerobic growth, and succinate dehydrogenase is used in aerobic growth. Anchors the catalytic components of the fumarate reductase complex to the cell inner membrane, binds quinones.</text>
</comment>
<comment type="subunit">
    <text evidence="1">Part of an enzyme complex containing four subunits: a flavoprotein (FrdA), an iron-sulfur protein (FrdB), and two hydrophobic anchor proteins (FrdC and FrdD).</text>
</comment>
<comment type="subcellular location">
    <subcellularLocation>
        <location evidence="1">Cell inner membrane</location>
        <topology evidence="1">Multi-pass membrane protein</topology>
    </subcellularLocation>
</comment>
<comment type="similarity">
    <text evidence="1">Belongs to the FrdC family.</text>
</comment>
<reference key="1">
    <citation type="submission" date="2008-04" db="EMBL/GenBank/DDBJ databases">
        <title>Complete sequence of Yersinia pseudotuberculosis PB1/+.</title>
        <authorList>
            <person name="Copeland A."/>
            <person name="Lucas S."/>
            <person name="Lapidus A."/>
            <person name="Glavina del Rio T."/>
            <person name="Dalin E."/>
            <person name="Tice H."/>
            <person name="Bruce D."/>
            <person name="Goodwin L."/>
            <person name="Pitluck S."/>
            <person name="Munk A.C."/>
            <person name="Brettin T."/>
            <person name="Detter J.C."/>
            <person name="Han C."/>
            <person name="Tapia R."/>
            <person name="Schmutz J."/>
            <person name="Larimer F."/>
            <person name="Land M."/>
            <person name="Hauser L."/>
            <person name="Challacombe J.F."/>
            <person name="Green L."/>
            <person name="Lindler L.E."/>
            <person name="Nikolich M.P."/>
            <person name="Richardson P."/>
        </authorList>
    </citation>
    <scope>NUCLEOTIDE SEQUENCE [LARGE SCALE GENOMIC DNA]</scope>
    <source>
        <strain>PB1/+</strain>
    </source>
</reference>
<proteinExistence type="inferred from homology"/>
<dbReference type="EMBL" id="CP001048">
    <property type="protein sequence ID" value="ACC87425.1"/>
    <property type="molecule type" value="Genomic_DNA"/>
</dbReference>
<dbReference type="RefSeq" id="WP_002209135.1">
    <property type="nucleotide sequence ID" value="NZ_CP009780.1"/>
</dbReference>
<dbReference type="SMR" id="B2K1Z0"/>
<dbReference type="GeneID" id="57974250"/>
<dbReference type="KEGG" id="ypb:YPTS_0437"/>
<dbReference type="PATRIC" id="fig|502801.10.peg.4112"/>
<dbReference type="GO" id="GO:0045283">
    <property type="term" value="C:fumarate reductase complex"/>
    <property type="evidence" value="ECO:0007669"/>
    <property type="project" value="UniProtKB-UniRule"/>
</dbReference>
<dbReference type="GO" id="GO:0005886">
    <property type="term" value="C:plasma membrane"/>
    <property type="evidence" value="ECO:0007669"/>
    <property type="project" value="UniProtKB-SubCell"/>
</dbReference>
<dbReference type="GO" id="GO:0000104">
    <property type="term" value="F:succinate dehydrogenase activity"/>
    <property type="evidence" value="ECO:0007669"/>
    <property type="project" value="UniProtKB-UniRule"/>
</dbReference>
<dbReference type="CDD" id="cd00546">
    <property type="entry name" value="QFR_TypeD_subunitC"/>
    <property type="match status" value="1"/>
</dbReference>
<dbReference type="Gene3D" id="1.20.1300.10">
    <property type="entry name" value="Fumarate reductase/succinate dehydrogenase, transmembrane subunit"/>
    <property type="match status" value="1"/>
</dbReference>
<dbReference type="HAMAP" id="MF_00708">
    <property type="entry name" value="Fumarate_red_C"/>
    <property type="match status" value="1"/>
</dbReference>
<dbReference type="InterPro" id="IPR003510">
    <property type="entry name" value="Fumarate_red_C"/>
</dbReference>
<dbReference type="InterPro" id="IPR034804">
    <property type="entry name" value="SQR/QFR_C/D"/>
</dbReference>
<dbReference type="NCBIfam" id="NF003445">
    <property type="entry name" value="PRK04987.1"/>
    <property type="match status" value="1"/>
</dbReference>
<dbReference type="Pfam" id="PF02300">
    <property type="entry name" value="Fumarate_red_C"/>
    <property type="match status" value="1"/>
</dbReference>
<dbReference type="PIRSF" id="PIRSF000180">
    <property type="entry name" value="FrdC"/>
    <property type="match status" value="1"/>
</dbReference>
<dbReference type="SUPFAM" id="SSF81343">
    <property type="entry name" value="Fumarate reductase respiratory complex transmembrane subunits"/>
    <property type="match status" value="1"/>
</dbReference>
<gene>
    <name evidence="1" type="primary">frdC</name>
    <name type="ordered locus">YPTS_0437</name>
</gene>
<name>FRDC_YERPB</name>
<feature type="chain" id="PRO_1000132390" description="Fumarate reductase subunit C">
    <location>
        <begin position="1"/>
        <end position="130"/>
    </location>
</feature>
<feature type="transmembrane region" description="Helical" evidence="1">
    <location>
        <begin position="30"/>
        <end position="50"/>
    </location>
</feature>
<feature type="transmembrane region" description="Helical" evidence="1">
    <location>
        <begin position="60"/>
        <end position="80"/>
    </location>
</feature>
<feature type="transmembrane region" description="Helical" evidence="1">
    <location>
        <begin position="110"/>
        <end position="130"/>
    </location>
</feature>
<organism>
    <name type="scientific">Yersinia pseudotuberculosis serotype IB (strain PB1/+)</name>
    <dbReference type="NCBI Taxonomy" id="502801"/>
    <lineage>
        <taxon>Bacteria</taxon>
        <taxon>Pseudomonadati</taxon>
        <taxon>Pseudomonadota</taxon>
        <taxon>Gammaproteobacteria</taxon>
        <taxon>Enterobacterales</taxon>
        <taxon>Yersiniaceae</taxon>
        <taxon>Yersinia</taxon>
    </lineage>
</organism>